<gene>
    <name evidence="6" type="primary">gyp2</name>
    <name type="ORF">SPCC1259.11c</name>
</gene>
<feature type="chain" id="PRO_0000312836" description="GTPase-activating protein gyp2">
    <location>
        <begin position="1"/>
        <end position="720"/>
    </location>
</feature>
<feature type="domain" description="GRAM" evidence="2">
    <location>
        <begin position="20"/>
        <end position="85"/>
    </location>
</feature>
<feature type="domain" description="Rab-GAP TBC" evidence="3">
    <location>
        <begin position="216"/>
        <end position="404"/>
    </location>
</feature>
<sequence>MNLLKHIFLEDDYDAYEGTLDPASFFRINKQEEIIASTVCEIGWEYSKSFGNAYICTSFLCFHSDDFKTRFTFPLAAVRKLERENSDNDTFTFDLSNFHSQIIHLRFKGTRQQSEFFCDRLVRQLHASLEDASSVGLFLLSLASERVCFSESANSQEIESIDLGLGSQFGYPIASSNTNGLINENNSKSWIQYLKKNGANFNLIQTPNFQKLVQSGIPNNLRADIWETCSGSLFPRWKSKGFYAKNIDSVINNRCEYSEEIEKDLTRSLPDYPAYQSPTGINTLRRILLFYSETNKEVGYCQAMNIVLAALLVYCTEEQAYFLFSQLCEFYIPGYYAKIIHGLLLDLTVFEYVLEHTLPHLYQKIIELDMDLKLITINWFFSLFIKDFRLDYAFRILDCLFVNGPRVLFQVALALFKVNAQGILNATDDSSVMKVFRQCFDHINQGTAADEKMAALGSRSSMCTLPQLFAVAFEYFDFITDSFVSAKRKEFKSSVLYSLRCFTKRSHLRSVYQTTLLSNTDLDLVYDAFINAIGENNICHGDVLEQKIDFNGFERLVDCAAPPLSVIREPLHYQRSKRKLFTRLYIWMKDGDSTETSLTFKRIIHGLERLKADIALHSEILCFQLYDLKRDGTLRTEEVVELSESLILLCCYEGDEKDEERLTVISEFLKSCFSGCQDRRSFQITMEDFQAIVDTTGLHATLEFFLKKLIDGLLGKLNAS</sequence>
<comment type="function">
    <text evidence="1">Stimulates specifically the GTPase activity of ypt2 and ryh1. Inactivates ryh1 during recycling between the endosome and the Golgi compartments (By similarity).</text>
</comment>
<comment type="subcellular location">
    <subcellularLocation>
        <location evidence="4">Cytoplasm</location>
    </subcellularLocation>
    <subcellularLocation>
        <location evidence="4">Nucleus</location>
    </subcellularLocation>
</comment>
<dbReference type="EMBL" id="CU329672">
    <property type="protein sequence ID" value="CAA22549.1"/>
    <property type="molecule type" value="Genomic_DNA"/>
</dbReference>
<dbReference type="PIR" id="T40900">
    <property type="entry name" value="T40900"/>
</dbReference>
<dbReference type="RefSeq" id="NP_588067.1">
    <property type="nucleotide sequence ID" value="NM_001023059.2"/>
</dbReference>
<dbReference type="SMR" id="O94711"/>
<dbReference type="BioGRID" id="275712">
    <property type="interactions" value="4"/>
</dbReference>
<dbReference type="FunCoup" id="O94711">
    <property type="interactions" value="74"/>
</dbReference>
<dbReference type="STRING" id="284812.O94711"/>
<dbReference type="PaxDb" id="4896-SPCC1259.11c.1"/>
<dbReference type="EnsemblFungi" id="SPCC1259.11c.1">
    <property type="protein sequence ID" value="SPCC1259.11c.1:pep"/>
    <property type="gene ID" value="SPCC1259.11c"/>
</dbReference>
<dbReference type="GeneID" id="2539140"/>
<dbReference type="KEGG" id="spo:2539140"/>
<dbReference type="PomBase" id="SPCC1259.11c">
    <property type="gene designation" value="gyp2"/>
</dbReference>
<dbReference type="VEuPathDB" id="FungiDB:SPCC1259.11c"/>
<dbReference type="eggNOG" id="KOG4347">
    <property type="taxonomic scope" value="Eukaryota"/>
</dbReference>
<dbReference type="HOGENOM" id="CLU_003538_0_1_1"/>
<dbReference type="InParanoid" id="O94711"/>
<dbReference type="OMA" id="QAYFLFS"/>
<dbReference type="PhylomeDB" id="O94711"/>
<dbReference type="PRO" id="PR:O94711"/>
<dbReference type="Proteomes" id="UP000002485">
    <property type="component" value="Chromosome III"/>
</dbReference>
<dbReference type="GO" id="GO:0005829">
    <property type="term" value="C:cytosol"/>
    <property type="evidence" value="ECO:0007005"/>
    <property type="project" value="PomBase"/>
</dbReference>
<dbReference type="GO" id="GO:0005634">
    <property type="term" value="C:nucleus"/>
    <property type="evidence" value="ECO:0007005"/>
    <property type="project" value="PomBase"/>
</dbReference>
<dbReference type="GO" id="GO:0005096">
    <property type="term" value="F:GTPase activator activity"/>
    <property type="evidence" value="ECO:0000318"/>
    <property type="project" value="GO_Central"/>
</dbReference>
<dbReference type="GO" id="GO:0016192">
    <property type="term" value="P:vesicle-mediated transport"/>
    <property type="evidence" value="ECO:0000303"/>
    <property type="project" value="PomBase"/>
</dbReference>
<dbReference type="FunFam" id="1.10.8.270:FF:000147">
    <property type="entry name" value="GTPase-activating protein gyp2"/>
    <property type="match status" value="1"/>
</dbReference>
<dbReference type="Gene3D" id="1.10.238.10">
    <property type="entry name" value="EF-hand"/>
    <property type="match status" value="1"/>
</dbReference>
<dbReference type="Gene3D" id="2.30.29.30">
    <property type="entry name" value="Pleckstrin-homology domain (PH domain)/Phosphotyrosine-binding domain (PTB)"/>
    <property type="match status" value="1"/>
</dbReference>
<dbReference type="Gene3D" id="1.10.8.270">
    <property type="entry name" value="putative rabgap domain of human tbc1 domain family member 14 like domains"/>
    <property type="match status" value="1"/>
</dbReference>
<dbReference type="Gene3D" id="1.10.472.80">
    <property type="entry name" value="Ypt/Rab-GAP domain of gyp1p, domain 3"/>
    <property type="match status" value="1"/>
</dbReference>
<dbReference type="InterPro" id="IPR011992">
    <property type="entry name" value="EF-hand-dom_pair"/>
</dbReference>
<dbReference type="InterPro" id="IPR004182">
    <property type="entry name" value="GRAM"/>
</dbReference>
<dbReference type="InterPro" id="IPR011993">
    <property type="entry name" value="PH-like_dom_sf"/>
</dbReference>
<dbReference type="InterPro" id="IPR000195">
    <property type="entry name" value="Rab-GAP-TBC_dom"/>
</dbReference>
<dbReference type="InterPro" id="IPR035969">
    <property type="entry name" value="Rab-GAP_TBC_sf"/>
</dbReference>
<dbReference type="InterPro" id="IPR050302">
    <property type="entry name" value="Rab_GAP_TBC_domain"/>
</dbReference>
<dbReference type="PANTHER" id="PTHR47219">
    <property type="entry name" value="RAB GTPASE-ACTIVATING PROTEIN 1-LIKE"/>
    <property type="match status" value="1"/>
</dbReference>
<dbReference type="PANTHER" id="PTHR47219:SF20">
    <property type="entry name" value="TBC1 DOMAIN FAMILY MEMBER 2B"/>
    <property type="match status" value="1"/>
</dbReference>
<dbReference type="Pfam" id="PF02893">
    <property type="entry name" value="GRAM"/>
    <property type="match status" value="1"/>
</dbReference>
<dbReference type="Pfam" id="PF00566">
    <property type="entry name" value="RabGAP-TBC"/>
    <property type="match status" value="1"/>
</dbReference>
<dbReference type="SMART" id="SM00568">
    <property type="entry name" value="GRAM"/>
    <property type="match status" value="1"/>
</dbReference>
<dbReference type="SMART" id="SM00164">
    <property type="entry name" value="TBC"/>
    <property type="match status" value="1"/>
</dbReference>
<dbReference type="SUPFAM" id="SSF47473">
    <property type="entry name" value="EF-hand"/>
    <property type="match status" value="1"/>
</dbReference>
<dbReference type="SUPFAM" id="SSF47923">
    <property type="entry name" value="Ypt/Rab-GAP domain of gyp1p"/>
    <property type="match status" value="2"/>
</dbReference>
<dbReference type="PROSITE" id="PS50086">
    <property type="entry name" value="TBC_RABGAP"/>
    <property type="match status" value="1"/>
</dbReference>
<name>GYP2_SCHPO</name>
<evidence type="ECO:0000250" key="1">
    <source>
        <dbReference type="UniProtKB" id="P53258"/>
    </source>
</evidence>
<evidence type="ECO:0000255" key="2"/>
<evidence type="ECO:0000255" key="3">
    <source>
        <dbReference type="PROSITE-ProRule" id="PRU00163"/>
    </source>
</evidence>
<evidence type="ECO:0000269" key="4">
    <source>
    </source>
</evidence>
<evidence type="ECO:0000305" key="5"/>
<evidence type="ECO:0000312" key="6">
    <source>
        <dbReference type="EMBL" id="CAA22549.1"/>
    </source>
</evidence>
<proteinExistence type="inferred from homology"/>
<organism>
    <name type="scientific">Schizosaccharomyces pombe (strain 972 / ATCC 24843)</name>
    <name type="common">Fission yeast</name>
    <dbReference type="NCBI Taxonomy" id="284812"/>
    <lineage>
        <taxon>Eukaryota</taxon>
        <taxon>Fungi</taxon>
        <taxon>Dikarya</taxon>
        <taxon>Ascomycota</taxon>
        <taxon>Taphrinomycotina</taxon>
        <taxon>Schizosaccharomycetes</taxon>
        <taxon>Schizosaccharomycetales</taxon>
        <taxon>Schizosaccharomycetaceae</taxon>
        <taxon>Schizosaccharomyces</taxon>
    </lineage>
</organism>
<protein>
    <recommendedName>
        <fullName>GTPase-activating protein gyp2</fullName>
    </recommendedName>
</protein>
<keyword id="KW-0963">Cytoplasm</keyword>
<keyword id="KW-0343">GTPase activation</keyword>
<keyword id="KW-0539">Nucleus</keyword>
<keyword id="KW-1185">Reference proteome</keyword>
<reference evidence="6" key="1">
    <citation type="journal article" date="2002" name="Nature">
        <title>The genome sequence of Schizosaccharomyces pombe.</title>
        <authorList>
            <person name="Wood V."/>
            <person name="Gwilliam R."/>
            <person name="Rajandream M.A."/>
            <person name="Lyne M.H."/>
            <person name="Lyne R."/>
            <person name="Stewart A."/>
            <person name="Sgouros J.G."/>
            <person name="Peat N."/>
            <person name="Hayles J."/>
            <person name="Baker S.G."/>
            <person name="Basham D."/>
            <person name="Bowman S."/>
            <person name="Brooks K."/>
            <person name="Brown D."/>
            <person name="Brown S."/>
            <person name="Chillingworth T."/>
            <person name="Churcher C.M."/>
            <person name="Collins M."/>
            <person name="Connor R."/>
            <person name="Cronin A."/>
            <person name="Davis P."/>
            <person name="Feltwell T."/>
            <person name="Fraser A."/>
            <person name="Gentles S."/>
            <person name="Goble A."/>
            <person name="Hamlin N."/>
            <person name="Harris D.E."/>
            <person name="Hidalgo J."/>
            <person name="Hodgson G."/>
            <person name="Holroyd S."/>
            <person name="Hornsby T."/>
            <person name="Howarth S."/>
            <person name="Huckle E.J."/>
            <person name="Hunt S."/>
            <person name="Jagels K."/>
            <person name="James K.D."/>
            <person name="Jones L."/>
            <person name="Jones M."/>
            <person name="Leather S."/>
            <person name="McDonald S."/>
            <person name="McLean J."/>
            <person name="Mooney P."/>
            <person name="Moule S."/>
            <person name="Mungall K.L."/>
            <person name="Murphy L.D."/>
            <person name="Niblett D."/>
            <person name="Odell C."/>
            <person name="Oliver K."/>
            <person name="O'Neil S."/>
            <person name="Pearson D."/>
            <person name="Quail M.A."/>
            <person name="Rabbinowitsch E."/>
            <person name="Rutherford K.M."/>
            <person name="Rutter S."/>
            <person name="Saunders D."/>
            <person name="Seeger K."/>
            <person name="Sharp S."/>
            <person name="Skelton J."/>
            <person name="Simmonds M.N."/>
            <person name="Squares R."/>
            <person name="Squares S."/>
            <person name="Stevens K."/>
            <person name="Taylor K."/>
            <person name="Taylor R.G."/>
            <person name="Tivey A."/>
            <person name="Walsh S.V."/>
            <person name="Warren T."/>
            <person name="Whitehead S."/>
            <person name="Woodward J.R."/>
            <person name="Volckaert G."/>
            <person name="Aert R."/>
            <person name="Robben J."/>
            <person name="Grymonprez B."/>
            <person name="Weltjens I."/>
            <person name="Vanstreels E."/>
            <person name="Rieger M."/>
            <person name="Schaefer M."/>
            <person name="Mueller-Auer S."/>
            <person name="Gabel C."/>
            <person name="Fuchs M."/>
            <person name="Duesterhoeft A."/>
            <person name="Fritzc C."/>
            <person name="Holzer E."/>
            <person name="Moestl D."/>
            <person name="Hilbert H."/>
            <person name="Borzym K."/>
            <person name="Langer I."/>
            <person name="Beck A."/>
            <person name="Lehrach H."/>
            <person name="Reinhardt R."/>
            <person name="Pohl T.M."/>
            <person name="Eger P."/>
            <person name="Zimmermann W."/>
            <person name="Wedler H."/>
            <person name="Wambutt R."/>
            <person name="Purnelle B."/>
            <person name="Goffeau A."/>
            <person name="Cadieu E."/>
            <person name="Dreano S."/>
            <person name="Gloux S."/>
            <person name="Lelaure V."/>
            <person name="Mottier S."/>
            <person name="Galibert F."/>
            <person name="Aves S.J."/>
            <person name="Xiang Z."/>
            <person name="Hunt C."/>
            <person name="Moore K."/>
            <person name="Hurst S.M."/>
            <person name="Lucas M."/>
            <person name="Rochet M."/>
            <person name="Gaillardin C."/>
            <person name="Tallada V.A."/>
            <person name="Garzon A."/>
            <person name="Thode G."/>
            <person name="Daga R.R."/>
            <person name="Cruzado L."/>
            <person name="Jimenez J."/>
            <person name="Sanchez M."/>
            <person name="del Rey F."/>
            <person name="Benito J."/>
            <person name="Dominguez A."/>
            <person name="Revuelta J.L."/>
            <person name="Moreno S."/>
            <person name="Armstrong J."/>
            <person name="Forsburg S.L."/>
            <person name="Cerutti L."/>
            <person name="Lowe T."/>
            <person name="McCombie W.R."/>
            <person name="Paulsen I."/>
            <person name="Potashkin J."/>
            <person name="Shpakovski G.V."/>
            <person name="Ussery D."/>
            <person name="Barrell B.G."/>
            <person name="Nurse P."/>
        </authorList>
    </citation>
    <scope>NUCLEOTIDE SEQUENCE [LARGE SCALE GENOMIC DNA]</scope>
    <source>
        <strain>972 / ATCC 24843</strain>
    </source>
</reference>
<reference evidence="5" key="2">
    <citation type="journal article" date="2006" name="Nat. Biotechnol.">
        <title>ORFeome cloning and global analysis of protein localization in the fission yeast Schizosaccharomyces pombe.</title>
        <authorList>
            <person name="Matsuyama A."/>
            <person name="Arai R."/>
            <person name="Yashiroda Y."/>
            <person name="Shirai A."/>
            <person name="Kamata A."/>
            <person name="Sekido S."/>
            <person name="Kobayashi Y."/>
            <person name="Hashimoto A."/>
            <person name="Hamamoto M."/>
            <person name="Hiraoka Y."/>
            <person name="Horinouchi S."/>
            <person name="Yoshida M."/>
        </authorList>
    </citation>
    <scope>SUBCELLULAR LOCATION [LARGE SCALE ANALYSIS]</scope>
</reference>
<accession>O94711</accession>